<organism>
    <name type="scientific">Orientia tsutsugamushi (strain Ikeda)</name>
    <name type="common">Rickettsia tsutsugamushi</name>
    <dbReference type="NCBI Taxonomy" id="334380"/>
    <lineage>
        <taxon>Bacteria</taxon>
        <taxon>Pseudomonadati</taxon>
        <taxon>Pseudomonadota</taxon>
        <taxon>Alphaproteobacteria</taxon>
        <taxon>Rickettsiales</taxon>
        <taxon>Rickettsiaceae</taxon>
        <taxon>Rickettsieae</taxon>
        <taxon>Orientia</taxon>
    </lineage>
</organism>
<evidence type="ECO:0000255" key="1">
    <source>
        <dbReference type="HAMAP-Rule" id="MF_01393"/>
    </source>
</evidence>
<protein>
    <recommendedName>
        <fullName evidence="1">ATP synthase subunit a</fullName>
    </recommendedName>
    <alternativeName>
        <fullName evidence="1">ATP synthase F0 sector subunit a</fullName>
    </alternativeName>
    <alternativeName>
        <fullName evidence="1">F-ATPase subunit 6</fullName>
    </alternativeName>
</protein>
<comment type="function">
    <text evidence="1">Key component of the proton channel; it plays a direct role in the translocation of protons across the membrane.</text>
</comment>
<comment type="subunit">
    <text evidence="1">F-type ATPases have 2 components, CF(1) - the catalytic core - and CF(0) - the membrane proton channel. CF(1) has five subunits: alpha(3), beta(3), gamma(1), delta(1), epsilon(1). CF(0) has three main subunits: a(1), b(2) and c(9-12). The alpha and beta chains form an alternating ring which encloses part of the gamma chain. CF(1) is attached to CF(0) by a central stalk formed by the gamma and epsilon chains, while a peripheral stalk is formed by the delta and b chains.</text>
</comment>
<comment type="subcellular location">
    <subcellularLocation>
        <location evidence="1">Cell inner membrane</location>
        <topology evidence="1">Multi-pass membrane protein</topology>
    </subcellularLocation>
</comment>
<comment type="similarity">
    <text evidence="1">Belongs to the ATPase A chain family.</text>
</comment>
<dbReference type="EMBL" id="AP008981">
    <property type="protein sequence ID" value="BAG39846.1"/>
    <property type="molecule type" value="Genomic_DNA"/>
</dbReference>
<dbReference type="RefSeq" id="WP_012461070.1">
    <property type="nucleotide sequence ID" value="NC_010793.1"/>
</dbReference>
<dbReference type="SMR" id="B3CQT9"/>
<dbReference type="KEGG" id="ott:OTT_0388"/>
<dbReference type="HOGENOM" id="CLU_041018_0_2_5"/>
<dbReference type="OrthoDB" id="9809130at2"/>
<dbReference type="Proteomes" id="UP000001033">
    <property type="component" value="Chromosome"/>
</dbReference>
<dbReference type="GO" id="GO:0005886">
    <property type="term" value="C:plasma membrane"/>
    <property type="evidence" value="ECO:0007669"/>
    <property type="project" value="UniProtKB-SubCell"/>
</dbReference>
<dbReference type="GO" id="GO:0045259">
    <property type="term" value="C:proton-transporting ATP synthase complex"/>
    <property type="evidence" value="ECO:0007669"/>
    <property type="project" value="UniProtKB-KW"/>
</dbReference>
<dbReference type="GO" id="GO:0046933">
    <property type="term" value="F:proton-transporting ATP synthase activity, rotational mechanism"/>
    <property type="evidence" value="ECO:0007669"/>
    <property type="project" value="UniProtKB-UniRule"/>
</dbReference>
<dbReference type="CDD" id="cd00310">
    <property type="entry name" value="ATP-synt_Fo_a_6"/>
    <property type="match status" value="1"/>
</dbReference>
<dbReference type="Gene3D" id="1.20.120.220">
    <property type="entry name" value="ATP synthase, F0 complex, subunit A"/>
    <property type="match status" value="1"/>
</dbReference>
<dbReference type="HAMAP" id="MF_01393">
    <property type="entry name" value="ATP_synth_a_bact"/>
    <property type="match status" value="1"/>
</dbReference>
<dbReference type="InterPro" id="IPR000568">
    <property type="entry name" value="ATP_synth_F0_asu"/>
</dbReference>
<dbReference type="InterPro" id="IPR023011">
    <property type="entry name" value="ATP_synth_F0_asu_AS"/>
</dbReference>
<dbReference type="InterPro" id="IPR045083">
    <property type="entry name" value="ATP_synth_F0_asu_bact/mt"/>
</dbReference>
<dbReference type="InterPro" id="IPR035908">
    <property type="entry name" value="F0_ATP_A_sf"/>
</dbReference>
<dbReference type="NCBIfam" id="TIGR01131">
    <property type="entry name" value="ATP_synt_6_or_A"/>
    <property type="match status" value="1"/>
</dbReference>
<dbReference type="NCBIfam" id="NF004482">
    <property type="entry name" value="PRK05815.2-4"/>
    <property type="match status" value="1"/>
</dbReference>
<dbReference type="PANTHER" id="PTHR11410">
    <property type="entry name" value="ATP SYNTHASE SUBUNIT A"/>
    <property type="match status" value="1"/>
</dbReference>
<dbReference type="PANTHER" id="PTHR11410:SF0">
    <property type="entry name" value="ATP SYNTHASE SUBUNIT A"/>
    <property type="match status" value="1"/>
</dbReference>
<dbReference type="Pfam" id="PF00119">
    <property type="entry name" value="ATP-synt_A"/>
    <property type="match status" value="1"/>
</dbReference>
<dbReference type="PRINTS" id="PR00123">
    <property type="entry name" value="ATPASEA"/>
</dbReference>
<dbReference type="SUPFAM" id="SSF81336">
    <property type="entry name" value="F1F0 ATP synthase subunit A"/>
    <property type="match status" value="1"/>
</dbReference>
<dbReference type="PROSITE" id="PS00449">
    <property type="entry name" value="ATPASE_A"/>
    <property type="match status" value="1"/>
</dbReference>
<proteinExistence type="inferred from homology"/>
<accession>B3CQT9</accession>
<gene>
    <name evidence="1" type="primary">atpB</name>
    <name type="ordered locus">OTT_0388</name>
</gene>
<keyword id="KW-0066">ATP synthesis</keyword>
<keyword id="KW-0997">Cell inner membrane</keyword>
<keyword id="KW-1003">Cell membrane</keyword>
<keyword id="KW-0138">CF(0)</keyword>
<keyword id="KW-0375">Hydrogen ion transport</keyword>
<keyword id="KW-0406">Ion transport</keyword>
<keyword id="KW-0472">Membrane</keyword>
<keyword id="KW-0812">Transmembrane</keyword>
<keyword id="KW-1133">Transmembrane helix</keyword>
<keyword id="KW-0813">Transport</keyword>
<sequence>MLANPLSQFLIKPIIPLEALGYNISITNSAVAMIFVSIAASMLLITAFVNSKLVPSRWQAFGEILYESNIKLVHSIIGPQGKKFFPLILTLFLFISLGNILGMVPHAFTFTSHIIVTFSLAMIVFTTTLVYGIYRHKLGFFSLFLPKNIPLWLAPIMVIIELCVFISKPISLSLRLTANMVAGHILLKIIAWSIVSLTWLFKPLPIALVIVLIGFELFISILQAYIFTILSCVYLRDVVNLH</sequence>
<name>ATP6_ORITI</name>
<reference key="1">
    <citation type="journal article" date="2008" name="DNA Res.">
        <title>The whole-genome sequencing of the obligate intracellular bacterium Orientia tsutsugamushi revealed massive gene amplification during reductive genome evolution.</title>
        <authorList>
            <person name="Nakayama K."/>
            <person name="Yamashita A."/>
            <person name="Kurokawa K."/>
            <person name="Morimoto T."/>
            <person name="Ogawa M."/>
            <person name="Fukuhara M."/>
            <person name="Urakami H."/>
            <person name="Ohnishi M."/>
            <person name="Uchiyama I."/>
            <person name="Ogura Y."/>
            <person name="Ooka T."/>
            <person name="Oshima K."/>
            <person name="Tamura A."/>
            <person name="Hattori M."/>
            <person name="Hayashi T."/>
        </authorList>
    </citation>
    <scope>NUCLEOTIDE SEQUENCE [LARGE SCALE GENOMIC DNA]</scope>
    <source>
        <strain>Ikeda</strain>
    </source>
</reference>
<feature type="chain" id="PRO_0000362361" description="ATP synthase subunit a">
    <location>
        <begin position="1"/>
        <end position="242"/>
    </location>
</feature>
<feature type="transmembrane region" description="Helical" evidence="1">
    <location>
        <begin position="29"/>
        <end position="49"/>
    </location>
</feature>
<feature type="transmembrane region" description="Helical" evidence="1">
    <location>
        <begin position="84"/>
        <end position="104"/>
    </location>
</feature>
<feature type="transmembrane region" description="Helical" evidence="1">
    <location>
        <begin position="114"/>
        <end position="134"/>
    </location>
</feature>
<feature type="transmembrane region" description="Helical" evidence="1">
    <location>
        <begin position="140"/>
        <end position="160"/>
    </location>
</feature>
<feature type="transmembrane region" description="Helical" evidence="1">
    <location>
        <begin position="181"/>
        <end position="201"/>
    </location>
</feature>
<feature type="transmembrane region" description="Helical" evidence="1">
    <location>
        <begin position="206"/>
        <end position="226"/>
    </location>
</feature>